<keyword id="KW-0067">ATP-binding</keyword>
<keyword id="KW-0963">Cytoplasm</keyword>
<keyword id="KW-0418">Kinase</keyword>
<keyword id="KW-0547">Nucleotide-binding</keyword>
<keyword id="KW-0808">Transferase</keyword>
<sequence length="189" mass="21704">MIIIISGPPGSGKTSVAIKLANELSYKFISAGKIFRDIAQKMGLDIINLNKVAESNFDIDKMVDKKIFEFILSEKNLIIESHIAGWLFREYTNIAIYLWAPLKIRANRIAIRDKISYDQAISQIIKREYMHYKRFNKFYGIDINDLSVFDLVINTSNVDVNNIVKLILTYLSSVSQNPQPLKEKDINDK</sequence>
<feature type="chain" id="PRO_1000204462" description="Cytidylate kinase">
    <location>
        <begin position="1"/>
        <end position="189"/>
    </location>
</feature>
<feature type="binding site" evidence="1">
    <location>
        <begin position="7"/>
        <end position="15"/>
    </location>
    <ligand>
        <name>ATP</name>
        <dbReference type="ChEBI" id="CHEBI:30616"/>
    </ligand>
</feature>
<proteinExistence type="inferred from homology"/>
<protein>
    <recommendedName>
        <fullName evidence="1">Cytidylate kinase</fullName>
        <shortName evidence="1">CK</shortName>
        <ecNumber evidence="1">2.7.4.25</ecNumber>
    </recommendedName>
    <alternativeName>
        <fullName evidence="1">Cytidine monophosphate kinase</fullName>
        <shortName evidence="1">CMP kinase</shortName>
    </alternativeName>
</protein>
<name>KCY_SACI4</name>
<reference key="1">
    <citation type="journal article" date="2009" name="Proc. Natl. Acad. Sci. U.S.A.">
        <title>Biogeography of the Sulfolobus islandicus pan-genome.</title>
        <authorList>
            <person name="Reno M.L."/>
            <person name="Held N.L."/>
            <person name="Fields C.J."/>
            <person name="Burke P.V."/>
            <person name="Whitaker R.J."/>
        </authorList>
    </citation>
    <scope>NUCLEOTIDE SEQUENCE [LARGE SCALE GENOMIC DNA]</scope>
    <source>
        <strain>M.14.25 / Kamchatka #1</strain>
    </source>
</reference>
<evidence type="ECO:0000255" key="1">
    <source>
        <dbReference type="HAMAP-Rule" id="MF_00239"/>
    </source>
</evidence>
<comment type="catalytic activity">
    <reaction evidence="1">
        <text>CMP + ATP = CDP + ADP</text>
        <dbReference type="Rhea" id="RHEA:11600"/>
        <dbReference type="ChEBI" id="CHEBI:30616"/>
        <dbReference type="ChEBI" id="CHEBI:58069"/>
        <dbReference type="ChEBI" id="CHEBI:60377"/>
        <dbReference type="ChEBI" id="CHEBI:456216"/>
        <dbReference type="EC" id="2.7.4.25"/>
    </reaction>
</comment>
<comment type="catalytic activity">
    <reaction evidence="1">
        <text>dCMP + ATP = dCDP + ADP</text>
        <dbReference type="Rhea" id="RHEA:25094"/>
        <dbReference type="ChEBI" id="CHEBI:30616"/>
        <dbReference type="ChEBI" id="CHEBI:57566"/>
        <dbReference type="ChEBI" id="CHEBI:58593"/>
        <dbReference type="ChEBI" id="CHEBI:456216"/>
        <dbReference type="EC" id="2.7.4.25"/>
    </reaction>
</comment>
<comment type="subcellular location">
    <subcellularLocation>
        <location evidence="1">Cytoplasm</location>
    </subcellularLocation>
</comment>
<comment type="similarity">
    <text evidence="1">Belongs to the cytidylate kinase family. Type 2 subfamily.</text>
</comment>
<organism>
    <name type="scientific">Saccharolobus islandicus (strain M.14.25 / Kamchatka #1)</name>
    <name type="common">Sulfolobus islandicus</name>
    <dbReference type="NCBI Taxonomy" id="427317"/>
    <lineage>
        <taxon>Archaea</taxon>
        <taxon>Thermoproteota</taxon>
        <taxon>Thermoprotei</taxon>
        <taxon>Sulfolobales</taxon>
        <taxon>Sulfolobaceae</taxon>
        <taxon>Saccharolobus</taxon>
    </lineage>
</organism>
<accession>C3MVX8</accession>
<gene>
    <name evidence="1" type="primary">cmk</name>
    <name type="ordered locus">M1425_1447</name>
</gene>
<dbReference type="EC" id="2.7.4.25" evidence="1"/>
<dbReference type="EMBL" id="CP001400">
    <property type="protein sequence ID" value="ACP38200.1"/>
    <property type="molecule type" value="Genomic_DNA"/>
</dbReference>
<dbReference type="RefSeq" id="WP_012711445.1">
    <property type="nucleotide sequence ID" value="NC_012588.1"/>
</dbReference>
<dbReference type="SMR" id="C3MVX8"/>
<dbReference type="GeneID" id="84061764"/>
<dbReference type="KEGG" id="sia:M1425_1447"/>
<dbReference type="HOGENOM" id="CLU_079959_1_0_2"/>
<dbReference type="Proteomes" id="UP000001350">
    <property type="component" value="Chromosome"/>
</dbReference>
<dbReference type="GO" id="GO:0005737">
    <property type="term" value="C:cytoplasm"/>
    <property type="evidence" value="ECO:0007669"/>
    <property type="project" value="UniProtKB-SubCell"/>
</dbReference>
<dbReference type="GO" id="GO:0005524">
    <property type="term" value="F:ATP binding"/>
    <property type="evidence" value="ECO:0007669"/>
    <property type="project" value="UniProtKB-UniRule"/>
</dbReference>
<dbReference type="GO" id="GO:0036430">
    <property type="term" value="F:CMP kinase activity"/>
    <property type="evidence" value="ECO:0007669"/>
    <property type="project" value="RHEA"/>
</dbReference>
<dbReference type="GO" id="GO:0036431">
    <property type="term" value="F:dCMP kinase activity"/>
    <property type="evidence" value="ECO:0007669"/>
    <property type="project" value="RHEA"/>
</dbReference>
<dbReference type="GO" id="GO:0006220">
    <property type="term" value="P:pyrimidine nucleotide metabolic process"/>
    <property type="evidence" value="ECO:0007669"/>
    <property type="project" value="UniProtKB-UniRule"/>
</dbReference>
<dbReference type="CDD" id="cd02020">
    <property type="entry name" value="CMPK"/>
    <property type="match status" value="1"/>
</dbReference>
<dbReference type="Gene3D" id="3.40.50.300">
    <property type="entry name" value="P-loop containing nucleotide triphosphate hydrolases"/>
    <property type="match status" value="1"/>
</dbReference>
<dbReference type="HAMAP" id="MF_00239">
    <property type="entry name" value="Cytidyl_kinase_type2"/>
    <property type="match status" value="1"/>
</dbReference>
<dbReference type="InterPro" id="IPR011892">
    <property type="entry name" value="Cyt_kin_arch"/>
</dbReference>
<dbReference type="InterPro" id="IPR011994">
    <property type="entry name" value="Cytidylate_kinase_dom"/>
</dbReference>
<dbReference type="InterPro" id="IPR027417">
    <property type="entry name" value="P-loop_NTPase"/>
</dbReference>
<dbReference type="NCBIfam" id="TIGR02173">
    <property type="entry name" value="cyt_kin_arch"/>
    <property type="match status" value="1"/>
</dbReference>
<dbReference type="Pfam" id="PF13189">
    <property type="entry name" value="Cytidylate_kin2"/>
    <property type="match status" value="1"/>
</dbReference>
<dbReference type="SUPFAM" id="SSF52540">
    <property type="entry name" value="P-loop containing nucleoside triphosphate hydrolases"/>
    <property type="match status" value="1"/>
</dbReference>